<accession>Q03W65</accession>
<comment type="function">
    <text evidence="1">Catalyzes the reversible conversion of 3-phosphohydroxypyruvate to phosphoserine and of 3-hydroxy-2-oxo-4-phosphonooxybutanoate to phosphohydroxythreonine.</text>
</comment>
<comment type="catalytic activity">
    <reaction evidence="1">
        <text>O-phospho-L-serine + 2-oxoglutarate = 3-phosphooxypyruvate + L-glutamate</text>
        <dbReference type="Rhea" id="RHEA:14329"/>
        <dbReference type="ChEBI" id="CHEBI:16810"/>
        <dbReference type="ChEBI" id="CHEBI:18110"/>
        <dbReference type="ChEBI" id="CHEBI:29985"/>
        <dbReference type="ChEBI" id="CHEBI:57524"/>
        <dbReference type="EC" id="2.6.1.52"/>
    </reaction>
</comment>
<comment type="catalytic activity">
    <reaction evidence="1">
        <text>4-(phosphooxy)-L-threonine + 2-oxoglutarate = (R)-3-hydroxy-2-oxo-4-phosphooxybutanoate + L-glutamate</text>
        <dbReference type="Rhea" id="RHEA:16573"/>
        <dbReference type="ChEBI" id="CHEBI:16810"/>
        <dbReference type="ChEBI" id="CHEBI:29985"/>
        <dbReference type="ChEBI" id="CHEBI:58452"/>
        <dbReference type="ChEBI" id="CHEBI:58538"/>
        <dbReference type="EC" id="2.6.1.52"/>
    </reaction>
</comment>
<comment type="cofactor">
    <cofactor evidence="1">
        <name>pyridoxal 5'-phosphate</name>
        <dbReference type="ChEBI" id="CHEBI:597326"/>
    </cofactor>
    <text evidence="1">Binds 1 pyridoxal phosphate per subunit.</text>
</comment>
<comment type="pathway">
    <text evidence="1">Amino-acid biosynthesis; L-serine biosynthesis; L-serine from 3-phospho-D-glycerate: step 2/3.</text>
</comment>
<comment type="subunit">
    <text evidence="1">Homodimer.</text>
</comment>
<comment type="subcellular location">
    <subcellularLocation>
        <location evidence="1">Cytoplasm</location>
    </subcellularLocation>
</comment>
<comment type="similarity">
    <text evidence="1">Belongs to the class-V pyridoxal-phosphate-dependent aminotransferase family. SerC subfamily.</text>
</comment>
<name>SERC_LEUMM</name>
<proteinExistence type="inferred from homology"/>
<sequence>MTNYNFSAGPGVLPTPVLTKIKNEFIKNEFTHMSIIEISHRSTQFEEIINSAEERLRDLMNISDDYGVAFIQGGGSTQFEMLPLNFANNKNRIAVLDSGNFASKAAQAAVTIGKQATILDSSKVDHYHHLPMLSTDFNADEYDYLHLTTNNTIEGATYHQSILPKTVGRLTADMSSNILAEPYDVNDFDAIFAGAQKNLGPAGVTVAIVKKDWLKEQNIENVGSMLRYQNYLDKHSMYNTPPVFSIYALNLVLEWVQEQGGVDSMYAQNIEKSSKLYDYLDNSTFYHALVDESARSLTNVVFTTADLERDQAIAKDATKEGLFNLSGHRSVGGFRASLYNAQPIEAVDALITFLKKAENNYK</sequence>
<protein>
    <recommendedName>
        <fullName evidence="1">Phosphoserine aminotransferase</fullName>
        <ecNumber evidence="1">2.6.1.52</ecNumber>
    </recommendedName>
    <alternativeName>
        <fullName evidence="1">Phosphohydroxythreonine aminotransferase</fullName>
        <shortName evidence="1">PSAT</shortName>
    </alternativeName>
</protein>
<feature type="chain" id="PRO_1000058216" description="Phosphoserine aminotransferase">
    <location>
        <begin position="1"/>
        <end position="362"/>
    </location>
</feature>
<feature type="binding site" evidence="1">
    <location>
        <position position="41"/>
    </location>
    <ligand>
        <name>L-glutamate</name>
        <dbReference type="ChEBI" id="CHEBI:29985"/>
    </ligand>
</feature>
<feature type="binding site" evidence="1">
    <location>
        <begin position="75"/>
        <end position="76"/>
    </location>
    <ligand>
        <name>pyridoxal 5'-phosphate</name>
        <dbReference type="ChEBI" id="CHEBI:597326"/>
    </ligand>
</feature>
<feature type="binding site" evidence="1">
    <location>
        <position position="101"/>
    </location>
    <ligand>
        <name>pyridoxal 5'-phosphate</name>
        <dbReference type="ChEBI" id="CHEBI:597326"/>
    </ligand>
</feature>
<feature type="binding site" evidence="1">
    <location>
        <position position="152"/>
    </location>
    <ligand>
        <name>pyridoxal 5'-phosphate</name>
        <dbReference type="ChEBI" id="CHEBI:597326"/>
    </ligand>
</feature>
<feature type="binding site" evidence="1">
    <location>
        <position position="173"/>
    </location>
    <ligand>
        <name>pyridoxal 5'-phosphate</name>
        <dbReference type="ChEBI" id="CHEBI:597326"/>
    </ligand>
</feature>
<feature type="binding site" evidence="1">
    <location>
        <position position="196"/>
    </location>
    <ligand>
        <name>pyridoxal 5'-phosphate</name>
        <dbReference type="ChEBI" id="CHEBI:597326"/>
    </ligand>
</feature>
<feature type="binding site" evidence="1">
    <location>
        <begin position="239"/>
        <end position="240"/>
    </location>
    <ligand>
        <name>pyridoxal 5'-phosphate</name>
        <dbReference type="ChEBI" id="CHEBI:597326"/>
    </ligand>
</feature>
<feature type="modified residue" description="N6-(pyridoxal phosphate)lysine" evidence="1">
    <location>
        <position position="197"/>
    </location>
</feature>
<gene>
    <name evidence="1" type="primary">serC</name>
    <name type="ordered locus">LEUM_1464</name>
</gene>
<evidence type="ECO:0000255" key="1">
    <source>
        <dbReference type="HAMAP-Rule" id="MF_00160"/>
    </source>
</evidence>
<dbReference type="EC" id="2.6.1.52" evidence="1"/>
<dbReference type="EMBL" id="CP000414">
    <property type="protein sequence ID" value="ABJ62557.1"/>
    <property type="molecule type" value="Genomic_DNA"/>
</dbReference>
<dbReference type="RefSeq" id="WP_011680146.1">
    <property type="nucleotide sequence ID" value="NC_008531.1"/>
</dbReference>
<dbReference type="SMR" id="Q03W65"/>
<dbReference type="EnsemblBacteria" id="ABJ62557">
    <property type="protein sequence ID" value="ABJ62557"/>
    <property type="gene ID" value="LEUM_1464"/>
</dbReference>
<dbReference type="GeneID" id="29576664"/>
<dbReference type="KEGG" id="lme:LEUM_1464"/>
<dbReference type="eggNOG" id="COG1932">
    <property type="taxonomic scope" value="Bacteria"/>
</dbReference>
<dbReference type="HOGENOM" id="CLU_034866_0_2_9"/>
<dbReference type="UniPathway" id="UPA00135">
    <property type="reaction ID" value="UER00197"/>
</dbReference>
<dbReference type="Proteomes" id="UP000000362">
    <property type="component" value="Chromosome"/>
</dbReference>
<dbReference type="GO" id="GO:0005737">
    <property type="term" value="C:cytoplasm"/>
    <property type="evidence" value="ECO:0007669"/>
    <property type="project" value="UniProtKB-SubCell"/>
</dbReference>
<dbReference type="GO" id="GO:0004648">
    <property type="term" value="F:O-phospho-L-serine:2-oxoglutarate aminotransferase activity"/>
    <property type="evidence" value="ECO:0007669"/>
    <property type="project" value="UniProtKB-UniRule"/>
</dbReference>
<dbReference type="GO" id="GO:0030170">
    <property type="term" value="F:pyridoxal phosphate binding"/>
    <property type="evidence" value="ECO:0007669"/>
    <property type="project" value="UniProtKB-UniRule"/>
</dbReference>
<dbReference type="GO" id="GO:0006564">
    <property type="term" value="P:L-serine biosynthetic process"/>
    <property type="evidence" value="ECO:0007669"/>
    <property type="project" value="UniProtKB-UniRule"/>
</dbReference>
<dbReference type="FunFam" id="3.40.640.10:FF:000010">
    <property type="entry name" value="Phosphoserine aminotransferase"/>
    <property type="match status" value="1"/>
</dbReference>
<dbReference type="FunFam" id="3.90.1150.10:FF:000006">
    <property type="entry name" value="Phosphoserine aminotransferase"/>
    <property type="match status" value="1"/>
</dbReference>
<dbReference type="Gene3D" id="3.90.1150.10">
    <property type="entry name" value="Aspartate Aminotransferase, domain 1"/>
    <property type="match status" value="1"/>
</dbReference>
<dbReference type="Gene3D" id="3.40.640.10">
    <property type="entry name" value="Type I PLP-dependent aspartate aminotransferase-like (Major domain)"/>
    <property type="match status" value="1"/>
</dbReference>
<dbReference type="HAMAP" id="MF_00160">
    <property type="entry name" value="SerC_aminotrans_5"/>
    <property type="match status" value="1"/>
</dbReference>
<dbReference type="InterPro" id="IPR000192">
    <property type="entry name" value="Aminotrans_V_dom"/>
</dbReference>
<dbReference type="InterPro" id="IPR020578">
    <property type="entry name" value="Aminotrans_V_PyrdxlP_BS"/>
</dbReference>
<dbReference type="InterPro" id="IPR022278">
    <property type="entry name" value="Pser_aminoTfrase"/>
</dbReference>
<dbReference type="InterPro" id="IPR015424">
    <property type="entry name" value="PyrdxlP-dep_Trfase"/>
</dbReference>
<dbReference type="InterPro" id="IPR015421">
    <property type="entry name" value="PyrdxlP-dep_Trfase_major"/>
</dbReference>
<dbReference type="InterPro" id="IPR015422">
    <property type="entry name" value="PyrdxlP-dep_Trfase_small"/>
</dbReference>
<dbReference type="NCBIfam" id="NF003764">
    <property type="entry name" value="PRK05355.1"/>
    <property type="match status" value="1"/>
</dbReference>
<dbReference type="PANTHER" id="PTHR43247">
    <property type="entry name" value="PHOSPHOSERINE AMINOTRANSFERASE"/>
    <property type="match status" value="1"/>
</dbReference>
<dbReference type="PANTHER" id="PTHR43247:SF1">
    <property type="entry name" value="PHOSPHOSERINE AMINOTRANSFERASE"/>
    <property type="match status" value="1"/>
</dbReference>
<dbReference type="Pfam" id="PF00266">
    <property type="entry name" value="Aminotran_5"/>
    <property type="match status" value="1"/>
</dbReference>
<dbReference type="PIRSF" id="PIRSF000525">
    <property type="entry name" value="SerC"/>
    <property type="match status" value="1"/>
</dbReference>
<dbReference type="SUPFAM" id="SSF53383">
    <property type="entry name" value="PLP-dependent transferases"/>
    <property type="match status" value="1"/>
</dbReference>
<dbReference type="PROSITE" id="PS00595">
    <property type="entry name" value="AA_TRANSFER_CLASS_5"/>
    <property type="match status" value="1"/>
</dbReference>
<organism>
    <name type="scientific">Leuconostoc mesenteroides subsp. mesenteroides (strain ATCC 8293 / DSM 20343 / BCRC 11652 / CCM 1803 / JCM 6124 / NCDO 523 / NBRC 100496 / NCIMB 8023 / NCTC 12954 / NRRL B-1118 / 37Y)</name>
    <dbReference type="NCBI Taxonomy" id="203120"/>
    <lineage>
        <taxon>Bacteria</taxon>
        <taxon>Bacillati</taxon>
        <taxon>Bacillota</taxon>
        <taxon>Bacilli</taxon>
        <taxon>Lactobacillales</taxon>
        <taxon>Lactobacillaceae</taxon>
        <taxon>Leuconostoc</taxon>
    </lineage>
</organism>
<keyword id="KW-0028">Amino-acid biosynthesis</keyword>
<keyword id="KW-0032">Aminotransferase</keyword>
<keyword id="KW-0963">Cytoplasm</keyword>
<keyword id="KW-0663">Pyridoxal phosphate</keyword>
<keyword id="KW-1185">Reference proteome</keyword>
<keyword id="KW-0718">Serine biosynthesis</keyword>
<keyword id="KW-0808">Transferase</keyword>
<reference key="1">
    <citation type="journal article" date="2006" name="Proc. Natl. Acad. Sci. U.S.A.">
        <title>Comparative genomics of the lactic acid bacteria.</title>
        <authorList>
            <person name="Makarova K.S."/>
            <person name="Slesarev A."/>
            <person name="Wolf Y.I."/>
            <person name="Sorokin A."/>
            <person name="Mirkin B."/>
            <person name="Koonin E.V."/>
            <person name="Pavlov A."/>
            <person name="Pavlova N."/>
            <person name="Karamychev V."/>
            <person name="Polouchine N."/>
            <person name="Shakhova V."/>
            <person name="Grigoriev I."/>
            <person name="Lou Y."/>
            <person name="Rohksar D."/>
            <person name="Lucas S."/>
            <person name="Huang K."/>
            <person name="Goodstein D.M."/>
            <person name="Hawkins T."/>
            <person name="Plengvidhya V."/>
            <person name="Welker D."/>
            <person name="Hughes J."/>
            <person name="Goh Y."/>
            <person name="Benson A."/>
            <person name="Baldwin K."/>
            <person name="Lee J.-H."/>
            <person name="Diaz-Muniz I."/>
            <person name="Dosti B."/>
            <person name="Smeianov V."/>
            <person name="Wechter W."/>
            <person name="Barabote R."/>
            <person name="Lorca G."/>
            <person name="Altermann E."/>
            <person name="Barrangou R."/>
            <person name="Ganesan B."/>
            <person name="Xie Y."/>
            <person name="Rawsthorne H."/>
            <person name="Tamir D."/>
            <person name="Parker C."/>
            <person name="Breidt F."/>
            <person name="Broadbent J.R."/>
            <person name="Hutkins R."/>
            <person name="O'Sullivan D."/>
            <person name="Steele J."/>
            <person name="Unlu G."/>
            <person name="Saier M.H. Jr."/>
            <person name="Klaenhammer T."/>
            <person name="Richardson P."/>
            <person name="Kozyavkin S."/>
            <person name="Weimer B.C."/>
            <person name="Mills D.A."/>
        </authorList>
    </citation>
    <scope>NUCLEOTIDE SEQUENCE [LARGE SCALE GENOMIC DNA]</scope>
    <source>
        <strain>ATCC 8293 / DSM 20343 / BCRC 11652 / CCM 1803 / JCM 6124 / NCDO 523 / NBRC 100496 / NCIMB 8023 / NCTC 12954 / NRRL B-1118 / 37Y</strain>
    </source>
</reference>